<reference key="1">
    <citation type="journal article" date="2015" name="Genome Announc.">
        <title>Genome sequence of Aspergillus flavus NRRL 3357, a strain that causes aflatoxin contamination of food and feed.</title>
        <authorList>
            <person name="Nierman W.C."/>
            <person name="Yu J."/>
            <person name="Fedorova-Abrams N.D."/>
            <person name="Losada L."/>
            <person name="Cleveland T.E."/>
            <person name="Bhatnagar D."/>
            <person name="Bennett J.W."/>
            <person name="Dean R."/>
            <person name="Payne G.A."/>
        </authorList>
    </citation>
    <scope>NUCLEOTIDE SEQUENCE [LARGE SCALE GENOMIC DNA]</scope>
    <source>
        <strain>ATCC 200026 / FGSC A1120 / IAM 13836 / NRRL 3357 / JCM 12722 / SRRC 167</strain>
    </source>
</reference>
<proteinExistence type="inferred from homology"/>
<sequence>MPPLLTNRQAEELHKSMIAYLVASDLPDTAAALRREVNLSEDVFDPTTAKRYEGMLEKKWTSIARLQKKIMDLESRNATLQSELDNSTPASRLKRNQDPASWLPSTVRYSLESHRDKVNCVAFHPTFSSIASGSDDCTIKIWDWELGELERTLKGHTRAVRDVDYGGPRDNVLLASCSSDLSIKLWKPTDNYKNIRTLQGHDHIVSAVRFIPSRNLLVSASRDNDMRIWDVTTGYCVKTINGHTDWVRDVSISFDGRFLFSTGQDMTARLWDISTVSNIEHKRTMLGHENFIECCAFAPPTSYQFLAPLAGLGKRPSSTNGADFMATGSRDNTIKIWDSRGTCLMTLVGHDSWVQALVFHPGGKYLLSVSDDKTLRCWDLNQQGKCVKTLDAHESFVTSLRWAPGVAKNVPGGDGAAEGEGNDKNGAGSENPANIQMRCVVATGGWDQKLKIFAG</sequence>
<gene>
    <name evidence="1" type="primary">nudF</name>
    <name evidence="1" type="synonym">lis1</name>
    <name type="ORF">AFLA_111200</name>
</gene>
<comment type="function">
    <text evidence="1">Positively regulates the activity of the minus-end directed microtubule motor protein dynein. May enhance dynein-mediated microtubule sliding by targeting dynein to the microtubule plus end. Required for nuclear migration during vegetative growth as well as development. Required for retrograde early endosome (EE) transport from the hyphal tip. Required for localization of dynein to the mitotic spindle poles. Recruits additional proteins to the dynein complex at SPBs.</text>
</comment>
<comment type="subunit">
    <text evidence="1">Self-associates. Interacts with nudE and dynein.</text>
</comment>
<comment type="subcellular location">
    <subcellularLocation>
        <location evidence="1">Cytoplasm</location>
        <location evidence="1">Cytoskeleton</location>
    </subcellularLocation>
    <subcellularLocation>
        <location evidence="1">Cytoplasm</location>
        <location evidence="1">Cytoskeleton</location>
        <location evidence="1">Spindle pole</location>
    </subcellularLocation>
    <text evidence="1">Localizes to the plus ends of microtubules at the hyphal tip and the mitotic spindle poles.</text>
</comment>
<comment type="domain">
    <text evidence="1">Dimerization mediated by the LisH domain may be required to activate dynein.</text>
</comment>
<comment type="similarity">
    <text evidence="1">Belongs to the WD repeat LIS1/nudF family.</text>
</comment>
<comment type="sequence caution" evidence="3">
    <conflict type="erroneous gene model prediction">
        <sequence resource="EMBL-CDS" id="EED53743"/>
    </conflict>
</comment>
<keyword id="KW-0131">Cell cycle</keyword>
<keyword id="KW-0132">Cell division</keyword>
<keyword id="KW-0175">Coiled coil</keyword>
<keyword id="KW-0963">Cytoplasm</keyword>
<keyword id="KW-0206">Cytoskeleton</keyword>
<keyword id="KW-0493">Microtubule</keyword>
<keyword id="KW-0498">Mitosis</keyword>
<keyword id="KW-0677">Repeat</keyword>
<keyword id="KW-0813">Transport</keyword>
<keyword id="KW-0853">WD repeat</keyword>
<accession>B8N9H4</accession>
<feature type="chain" id="PRO_0000405068" description="Nuclear distribution protein nudF">
    <location>
        <begin position="1"/>
        <end position="455"/>
    </location>
</feature>
<feature type="domain" description="LisH" evidence="1">
    <location>
        <begin position="9"/>
        <end position="41"/>
    </location>
</feature>
<feature type="repeat" description="WD 1">
    <location>
        <begin position="113"/>
        <end position="154"/>
    </location>
</feature>
<feature type="repeat" description="WD 2">
    <location>
        <begin position="156"/>
        <end position="196"/>
    </location>
</feature>
<feature type="repeat" description="WD 3">
    <location>
        <begin position="200"/>
        <end position="239"/>
    </location>
</feature>
<feature type="repeat" description="WD 4">
    <location>
        <begin position="242"/>
        <end position="281"/>
    </location>
</feature>
<feature type="repeat" description="WD 5">
    <location>
        <begin position="287"/>
        <end position="347"/>
    </location>
</feature>
<feature type="repeat" description="WD 6">
    <location>
        <begin position="349"/>
        <end position="388"/>
    </location>
</feature>
<feature type="repeat" description="WD 7">
    <location>
        <begin position="392"/>
        <end position="438"/>
    </location>
</feature>
<feature type="repeat" description="WD 8">
    <location>
        <begin position="440"/>
        <end position="455"/>
    </location>
</feature>
<feature type="region of interest" description="Disordered" evidence="2">
    <location>
        <begin position="408"/>
        <end position="431"/>
    </location>
</feature>
<feature type="coiled-coil region" evidence="1">
    <location>
        <begin position="61"/>
        <end position="88"/>
    </location>
</feature>
<evidence type="ECO:0000255" key="1">
    <source>
        <dbReference type="HAMAP-Rule" id="MF_03141"/>
    </source>
</evidence>
<evidence type="ECO:0000256" key="2">
    <source>
        <dbReference type="SAM" id="MobiDB-lite"/>
    </source>
</evidence>
<evidence type="ECO:0000305" key="3"/>
<dbReference type="EMBL" id="EQ963475">
    <property type="protein sequence ID" value="EED53743.1"/>
    <property type="status" value="ALT_SEQ"/>
    <property type="molecule type" value="Genomic_DNA"/>
</dbReference>
<dbReference type="RefSeq" id="XP_002376989.1">
    <property type="nucleotide sequence ID" value="XM_002376948.1"/>
</dbReference>
<dbReference type="SMR" id="B8N9H4"/>
<dbReference type="STRING" id="332952.B8N9H4"/>
<dbReference type="EnsemblFungi" id="EED53743">
    <property type="protein sequence ID" value="EED53743"/>
    <property type="gene ID" value="AFLA_111200"/>
</dbReference>
<dbReference type="VEuPathDB" id="FungiDB:AFLA_007055"/>
<dbReference type="eggNOG" id="KOG0295">
    <property type="taxonomic scope" value="Eukaryota"/>
</dbReference>
<dbReference type="GO" id="GO:0005737">
    <property type="term" value="C:cytoplasm"/>
    <property type="evidence" value="ECO:0007669"/>
    <property type="project" value="UniProtKB-UniRule"/>
</dbReference>
<dbReference type="GO" id="GO:0005874">
    <property type="term" value="C:microtubule"/>
    <property type="evidence" value="ECO:0007669"/>
    <property type="project" value="UniProtKB-KW"/>
</dbReference>
<dbReference type="GO" id="GO:0005875">
    <property type="term" value="C:microtubule associated complex"/>
    <property type="evidence" value="ECO:0007669"/>
    <property type="project" value="UniProtKB-UniRule"/>
</dbReference>
<dbReference type="GO" id="GO:0000922">
    <property type="term" value="C:spindle pole"/>
    <property type="evidence" value="ECO:0007669"/>
    <property type="project" value="UniProtKB-SubCell"/>
</dbReference>
<dbReference type="GO" id="GO:0070840">
    <property type="term" value="F:dynein complex binding"/>
    <property type="evidence" value="ECO:0007669"/>
    <property type="project" value="UniProtKB-UniRule"/>
</dbReference>
<dbReference type="GO" id="GO:0051301">
    <property type="term" value="P:cell division"/>
    <property type="evidence" value="ECO:0007669"/>
    <property type="project" value="UniProtKB-KW"/>
</dbReference>
<dbReference type="GO" id="GO:0000132">
    <property type="term" value="P:establishment of mitotic spindle orientation"/>
    <property type="evidence" value="ECO:0007669"/>
    <property type="project" value="UniProtKB-UniRule"/>
</dbReference>
<dbReference type="GO" id="GO:0051012">
    <property type="term" value="P:microtubule sliding"/>
    <property type="evidence" value="ECO:0007669"/>
    <property type="project" value="UniProtKB-UniRule"/>
</dbReference>
<dbReference type="CDD" id="cd00200">
    <property type="entry name" value="WD40"/>
    <property type="match status" value="1"/>
</dbReference>
<dbReference type="FunFam" id="2.130.10.10:FF:000342">
    <property type="entry name" value="Nuclear distribution protein PAC1"/>
    <property type="match status" value="1"/>
</dbReference>
<dbReference type="FunFam" id="1.20.960.30:FF:000002">
    <property type="entry name" value="Platelet-activating factor acetylhydrolase ib"/>
    <property type="match status" value="1"/>
</dbReference>
<dbReference type="Gene3D" id="1.20.960.30">
    <property type="match status" value="1"/>
</dbReference>
<dbReference type="Gene3D" id="2.130.10.10">
    <property type="entry name" value="YVTN repeat-like/Quinoprotein amine dehydrogenase"/>
    <property type="match status" value="1"/>
</dbReference>
<dbReference type="HAMAP" id="MF_03141">
    <property type="entry name" value="lis1"/>
    <property type="match status" value="1"/>
</dbReference>
<dbReference type="InterPro" id="IPR017252">
    <property type="entry name" value="Dynein_regulator_LIS1"/>
</dbReference>
<dbReference type="InterPro" id="IPR020472">
    <property type="entry name" value="G-protein_beta_WD-40_rep"/>
</dbReference>
<dbReference type="InterPro" id="IPR037190">
    <property type="entry name" value="LIS1_N"/>
</dbReference>
<dbReference type="InterPro" id="IPR006594">
    <property type="entry name" value="LisH"/>
</dbReference>
<dbReference type="InterPro" id="IPR056795">
    <property type="entry name" value="PAC1-like_LisH-like_dom"/>
</dbReference>
<dbReference type="InterPro" id="IPR015943">
    <property type="entry name" value="WD40/YVTN_repeat-like_dom_sf"/>
</dbReference>
<dbReference type="InterPro" id="IPR019775">
    <property type="entry name" value="WD40_repeat_CS"/>
</dbReference>
<dbReference type="InterPro" id="IPR036322">
    <property type="entry name" value="WD40_repeat_dom_sf"/>
</dbReference>
<dbReference type="InterPro" id="IPR001680">
    <property type="entry name" value="WD40_rpt"/>
</dbReference>
<dbReference type="PANTHER" id="PTHR19879">
    <property type="entry name" value="TRANSCRIPTION INITIATION FACTOR TFIID"/>
    <property type="match status" value="1"/>
</dbReference>
<dbReference type="PANTHER" id="PTHR19879:SF9">
    <property type="entry name" value="TRANSCRIPTION INITIATION FACTOR TFIID SUBUNIT 5"/>
    <property type="match status" value="1"/>
</dbReference>
<dbReference type="Pfam" id="PF24951">
    <property type="entry name" value="LisH_PAC1"/>
    <property type="match status" value="1"/>
</dbReference>
<dbReference type="Pfam" id="PF00400">
    <property type="entry name" value="WD40"/>
    <property type="match status" value="7"/>
</dbReference>
<dbReference type="PIRSF" id="PIRSF037647">
    <property type="entry name" value="Dynein_regulator_Lis1"/>
    <property type="match status" value="1"/>
</dbReference>
<dbReference type="PRINTS" id="PR00320">
    <property type="entry name" value="GPROTEINBRPT"/>
</dbReference>
<dbReference type="SMART" id="SM00320">
    <property type="entry name" value="WD40"/>
    <property type="match status" value="7"/>
</dbReference>
<dbReference type="SUPFAM" id="SSF109925">
    <property type="entry name" value="Lissencephaly-1 protein (Lis-1, PAF-AH alpha) N-terminal domain"/>
    <property type="match status" value="1"/>
</dbReference>
<dbReference type="SUPFAM" id="SSF50978">
    <property type="entry name" value="WD40 repeat-like"/>
    <property type="match status" value="1"/>
</dbReference>
<dbReference type="PROSITE" id="PS50896">
    <property type="entry name" value="LISH"/>
    <property type="match status" value="1"/>
</dbReference>
<dbReference type="PROSITE" id="PS00678">
    <property type="entry name" value="WD_REPEATS_1"/>
    <property type="match status" value="3"/>
</dbReference>
<dbReference type="PROSITE" id="PS50082">
    <property type="entry name" value="WD_REPEATS_2"/>
    <property type="match status" value="6"/>
</dbReference>
<dbReference type="PROSITE" id="PS50294">
    <property type="entry name" value="WD_REPEATS_REGION"/>
    <property type="match status" value="1"/>
</dbReference>
<organism>
    <name type="scientific">Aspergillus flavus (strain ATCC 200026 / FGSC A1120 / IAM 13836 / NRRL 3357 / JCM 12722 / SRRC 167)</name>
    <dbReference type="NCBI Taxonomy" id="332952"/>
    <lineage>
        <taxon>Eukaryota</taxon>
        <taxon>Fungi</taxon>
        <taxon>Dikarya</taxon>
        <taxon>Ascomycota</taxon>
        <taxon>Pezizomycotina</taxon>
        <taxon>Eurotiomycetes</taxon>
        <taxon>Eurotiomycetidae</taxon>
        <taxon>Eurotiales</taxon>
        <taxon>Aspergillaceae</taxon>
        <taxon>Aspergillus</taxon>
        <taxon>Aspergillus subgen. Circumdati</taxon>
    </lineage>
</organism>
<name>LIS1_ASPFN</name>
<protein>
    <recommendedName>
        <fullName evidence="1">Nuclear distribution protein nudF</fullName>
    </recommendedName>
    <alternativeName>
        <fullName evidence="1">Lissencephaly-1 homolog</fullName>
        <shortName evidence="1">LIS-1</shortName>
    </alternativeName>
</protein>